<name>RL18A_METJA</name>
<proteinExistence type="inferred from homology"/>
<organism>
    <name type="scientific">Methanocaldococcus jannaschii (strain ATCC 43067 / DSM 2661 / JAL-1 / JCM 10045 / NBRC 100440)</name>
    <name type="common">Methanococcus jannaschii</name>
    <dbReference type="NCBI Taxonomy" id="243232"/>
    <lineage>
        <taxon>Archaea</taxon>
        <taxon>Methanobacteriati</taxon>
        <taxon>Methanobacteriota</taxon>
        <taxon>Methanomada group</taxon>
        <taxon>Methanococci</taxon>
        <taxon>Methanococcales</taxon>
        <taxon>Methanocaldococcaceae</taxon>
        <taxon>Methanocaldococcus</taxon>
    </lineage>
</organism>
<protein>
    <recommendedName>
        <fullName evidence="1">Large ribosomal subunit protein eL20</fullName>
    </recommendedName>
    <alternativeName>
        <fullName evidence="2">50S ribosomal protein L18Ae</fullName>
    </alternativeName>
    <alternativeName>
        <fullName evidence="1">50S ribosomal protein L20e</fullName>
    </alternativeName>
    <alternativeName>
        <fullName evidence="1">50S ribosomal protein LX</fullName>
    </alternativeName>
</protein>
<sequence>MAKIFRITGIMSKKGKDPLYFRKEYKALKPEDALEILYSEFGGRYKVKRSRIKILNIEEIKPEDVTDPVLKKLVTA</sequence>
<gene>
    <name evidence="1" type="primary">rpl18a</name>
    <name evidence="1" type="synonym">rpl20e</name>
    <name evidence="1" type="synonym">rplX</name>
    <name type="ordered locus">MJ0595</name>
</gene>
<keyword id="KW-1185">Reference proteome</keyword>
<keyword id="KW-0687">Ribonucleoprotein</keyword>
<keyword id="KW-0689">Ribosomal protein</keyword>
<keyword id="KW-0694">RNA-binding</keyword>
<keyword id="KW-0699">rRNA-binding</keyword>
<comment type="subunit">
    <text evidence="1">Part of the 50S ribosomal subunit. Binds 23S rRNA.</text>
</comment>
<comment type="similarity">
    <text evidence="1">Belongs to the eukaryotic ribosomal protein eL20 family.</text>
</comment>
<feature type="chain" id="PRO_0000153698" description="Large ribosomal subunit protein eL20">
    <location>
        <begin position="1"/>
        <end position="76"/>
    </location>
</feature>
<dbReference type="EMBL" id="L77117">
    <property type="protein sequence ID" value="AAB98588.1"/>
    <property type="molecule type" value="Genomic_DNA"/>
</dbReference>
<dbReference type="PIR" id="C64374">
    <property type="entry name" value="C64374"/>
</dbReference>
<dbReference type="RefSeq" id="WP_010870099.1">
    <property type="nucleotide sequence ID" value="NC_000909.1"/>
</dbReference>
<dbReference type="SMR" id="P54052"/>
<dbReference type="FunCoup" id="P54052">
    <property type="interactions" value="60"/>
</dbReference>
<dbReference type="STRING" id="243232.MJ_0595"/>
<dbReference type="PaxDb" id="243232-MJ_0595"/>
<dbReference type="EnsemblBacteria" id="AAB98588">
    <property type="protein sequence ID" value="AAB98588"/>
    <property type="gene ID" value="MJ_0595"/>
</dbReference>
<dbReference type="GeneID" id="1451460"/>
<dbReference type="KEGG" id="mja:MJ_0595"/>
<dbReference type="eggNOG" id="arCOG04175">
    <property type="taxonomic scope" value="Archaea"/>
</dbReference>
<dbReference type="HOGENOM" id="CLU_177460_0_1_2"/>
<dbReference type="InParanoid" id="P54052"/>
<dbReference type="OrthoDB" id="191241at2157"/>
<dbReference type="PhylomeDB" id="P54052"/>
<dbReference type="Proteomes" id="UP000000805">
    <property type="component" value="Chromosome"/>
</dbReference>
<dbReference type="GO" id="GO:1990904">
    <property type="term" value="C:ribonucleoprotein complex"/>
    <property type="evidence" value="ECO:0007669"/>
    <property type="project" value="UniProtKB-KW"/>
</dbReference>
<dbReference type="GO" id="GO:0005840">
    <property type="term" value="C:ribosome"/>
    <property type="evidence" value="ECO:0007669"/>
    <property type="project" value="UniProtKB-KW"/>
</dbReference>
<dbReference type="GO" id="GO:0070180">
    <property type="term" value="F:large ribosomal subunit rRNA binding"/>
    <property type="evidence" value="ECO:0007669"/>
    <property type="project" value="UniProtKB-UniRule"/>
</dbReference>
<dbReference type="GO" id="GO:0003735">
    <property type="term" value="F:structural constituent of ribosome"/>
    <property type="evidence" value="ECO:0007669"/>
    <property type="project" value="InterPro"/>
</dbReference>
<dbReference type="GO" id="GO:0006412">
    <property type="term" value="P:translation"/>
    <property type="evidence" value="ECO:0007669"/>
    <property type="project" value="UniProtKB-UniRule"/>
</dbReference>
<dbReference type="Gene3D" id="3.10.20.10">
    <property type="match status" value="1"/>
</dbReference>
<dbReference type="HAMAP" id="MF_00273">
    <property type="entry name" value="Ribosomal_eL20"/>
    <property type="match status" value="1"/>
</dbReference>
<dbReference type="InterPro" id="IPR028877">
    <property type="entry name" value="Ribosomal_eL20"/>
</dbReference>
<dbReference type="InterPro" id="IPR023573">
    <property type="entry name" value="Ribosomal_eL20_dom"/>
</dbReference>
<dbReference type="NCBIfam" id="NF001981">
    <property type="entry name" value="PRK00773.1-1"/>
    <property type="match status" value="1"/>
</dbReference>
<dbReference type="Pfam" id="PF01775">
    <property type="entry name" value="Ribosomal_L18A"/>
    <property type="match status" value="1"/>
</dbReference>
<dbReference type="SUPFAM" id="SSF160374">
    <property type="entry name" value="RplX-like"/>
    <property type="match status" value="1"/>
</dbReference>
<reference key="1">
    <citation type="journal article" date="1996" name="Science">
        <title>Complete genome sequence of the methanogenic archaeon, Methanococcus jannaschii.</title>
        <authorList>
            <person name="Bult C.J."/>
            <person name="White O."/>
            <person name="Olsen G.J."/>
            <person name="Zhou L."/>
            <person name="Fleischmann R.D."/>
            <person name="Sutton G.G."/>
            <person name="Blake J.A."/>
            <person name="FitzGerald L.M."/>
            <person name="Clayton R.A."/>
            <person name="Gocayne J.D."/>
            <person name="Kerlavage A.R."/>
            <person name="Dougherty B.A."/>
            <person name="Tomb J.-F."/>
            <person name="Adams M.D."/>
            <person name="Reich C.I."/>
            <person name="Overbeek R."/>
            <person name="Kirkness E.F."/>
            <person name="Weinstock K.G."/>
            <person name="Merrick J.M."/>
            <person name="Glodek A."/>
            <person name="Scott J.L."/>
            <person name="Geoghagen N.S.M."/>
            <person name="Weidman J.F."/>
            <person name="Fuhrmann J.L."/>
            <person name="Nguyen D."/>
            <person name="Utterback T.R."/>
            <person name="Kelley J.M."/>
            <person name="Peterson J.D."/>
            <person name="Sadow P.W."/>
            <person name="Hanna M.C."/>
            <person name="Cotton M.D."/>
            <person name="Roberts K.M."/>
            <person name="Hurst M.A."/>
            <person name="Kaine B.P."/>
            <person name="Borodovsky M."/>
            <person name="Klenk H.-P."/>
            <person name="Fraser C.M."/>
            <person name="Smith H.O."/>
            <person name="Woese C.R."/>
            <person name="Venter J.C."/>
        </authorList>
    </citation>
    <scope>NUCLEOTIDE SEQUENCE [LARGE SCALE GENOMIC DNA]</scope>
    <source>
        <strain>ATCC 43067 / DSM 2661 / JAL-1 / JCM 10045 / NBRC 100440</strain>
    </source>
</reference>
<evidence type="ECO:0000255" key="1">
    <source>
        <dbReference type="HAMAP-Rule" id="MF_00273"/>
    </source>
</evidence>
<evidence type="ECO:0000305" key="2"/>
<accession>P54052</accession>